<evidence type="ECO:0000250" key="1"/>
<evidence type="ECO:0000255" key="2"/>
<evidence type="ECO:0000256" key="3">
    <source>
        <dbReference type="SAM" id="MobiDB-lite"/>
    </source>
</evidence>
<evidence type="ECO:0000269" key="4">
    <source>
    </source>
</evidence>
<evidence type="ECO:0000269" key="5">
    <source>
    </source>
</evidence>
<evidence type="ECO:0000303" key="6">
    <source>
    </source>
</evidence>
<evidence type="ECO:0000303" key="7">
    <source>
    </source>
</evidence>
<evidence type="ECO:0000305" key="8"/>
<comment type="function">
    <text evidence="4 5">Calcium ATPase involved in Ca(2+) homeostasis as a component of the contractile vacuole complex.</text>
</comment>
<comment type="catalytic activity">
    <reaction evidence="5">
        <text>Ca(2+)(in) + ATP + H2O = Ca(2+)(out) + ADP + phosphate + H(+)</text>
        <dbReference type="Rhea" id="RHEA:18105"/>
        <dbReference type="ChEBI" id="CHEBI:15377"/>
        <dbReference type="ChEBI" id="CHEBI:15378"/>
        <dbReference type="ChEBI" id="CHEBI:29108"/>
        <dbReference type="ChEBI" id="CHEBI:30616"/>
        <dbReference type="ChEBI" id="CHEBI:43474"/>
        <dbReference type="ChEBI" id="CHEBI:456216"/>
        <dbReference type="EC" id="7.2.2.10"/>
    </reaction>
    <physiologicalReaction direction="left-to-right" evidence="5">
        <dbReference type="Rhea" id="RHEA:18106"/>
    </physiologicalReaction>
</comment>
<comment type="subcellular location">
    <subcellularLocation>
        <location evidence="5">Contractile vacuole membrane</location>
        <topology evidence="5">Multi-pass membrane protein</topology>
    </subcellularLocation>
    <subcellularLocation>
        <location evidence="4">Cell membrane</location>
        <topology evidence="4">Multi-pass membrane protein</topology>
    </subcellularLocation>
    <text evidence="5">Contractile vacuole complex. Localizes to the contractile vacuole membrane in unstimulated cells (PubMed:9885293). Localizes to the cell membrane and the contractile vacuole membrane in cells stimulated by calcium (PubMed:9885293).</text>
</comment>
<comment type="developmental stage">
    <text evidence="4">Expressed constitutively at very low levels during vegetative growth and throughout development.</text>
</comment>
<comment type="induction">
    <text evidence="4 5">By calcium.</text>
</comment>
<comment type="miscellaneous">
    <text>Loss-of-function mutant (antisense inhibition) displays impaired growth in high Ca(2+) medium but normal growth in low Ca(2+) medium. Antisense inhibition does not affect development in high Ca(2+) medium.</text>
</comment>
<comment type="similarity">
    <text evidence="8">Belongs to the cation transport ATPase (P-type) (TC 3.A.3) family. Type IIB subfamily.</text>
</comment>
<protein>
    <recommendedName>
        <fullName>Calcium-transporting ATPase PAT1</fullName>
        <shortName evidence="6 7">PAT1</shortName>
        <ecNumber evidence="5">7.2.2.10</ecNumber>
    </recommendedName>
</protein>
<name>ATC1_DICDI</name>
<dbReference type="EC" id="7.2.2.10" evidence="5"/>
<dbReference type="EMBL" id="X89369">
    <property type="protein sequence ID" value="CAA61551.1"/>
    <property type="molecule type" value="mRNA"/>
</dbReference>
<dbReference type="EMBL" id="AAFI02000023">
    <property type="protein sequence ID" value="EAL68103.2"/>
    <property type="molecule type" value="Genomic_DNA"/>
</dbReference>
<dbReference type="PIR" id="S57726">
    <property type="entry name" value="S57726"/>
</dbReference>
<dbReference type="RefSeq" id="XP_642164.2">
    <property type="nucleotide sequence ID" value="XM_637072.2"/>
</dbReference>
<dbReference type="SMR" id="P54678"/>
<dbReference type="FunCoup" id="P54678">
    <property type="interactions" value="11"/>
</dbReference>
<dbReference type="STRING" id="44689.P54678"/>
<dbReference type="TCDB" id="3.A.3.2.17">
    <property type="family name" value="the p-type atpase (p-atpase) superfamily"/>
</dbReference>
<dbReference type="GlyGen" id="P54678">
    <property type="glycosylation" value="2 sites"/>
</dbReference>
<dbReference type="PaxDb" id="44689-DDB0214945"/>
<dbReference type="EnsemblProtists" id="EAL68103">
    <property type="protein sequence ID" value="EAL68103"/>
    <property type="gene ID" value="DDB_G0277861"/>
</dbReference>
<dbReference type="GeneID" id="8621371"/>
<dbReference type="KEGG" id="ddi:DDB_G0277861"/>
<dbReference type="dictyBase" id="DDB_G0277861">
    <property type="gene designation" value="patA"/>
</dbReference>
<dbReference type="VEuPathDB" id="AmoebaDB:DDB_G0277861"/>
<dbReference type="eggNOG" id="KOG0204">
    <property type="taxonomic scope" value="Eukaryota"/>
</dbReference>
<dbReference type="HOGENOM" id="CLU_002360_9_2_1"/>
<dbReference type="InParanoid" id="P54678"/>
<dbReference type="OMA" id="QICADEM"/>
<dbReference type="PhylomeDB" id="P54678"/>
<dbReference type="Reactome" id="R-DDI-418359">
    <property type="pathway name" value="Reduction of cytosolic Ca++ levels"/>
</dbReference>
<dbReference type="Reactome" id="R-DDI-5578775">
    <property type="pathway name" value="Ion homeostasis"/>
</dbReference>
<dbReference type="Reactome" id="R-DDI-936837">
    <property type="pathway name" value="Ion transport by P-type ATPases"/>
</dbReference>
<dbReference type="PRO" id="PR:P54678"/>
<dbReference type="Proteomes" id="UP000002195">
    <property type="component" value="Chromosome 3"/>
</dbReference>
<dbReference type="GO" id="GO:0031164">
    <property type="term" value="C:contractile vacuolar membrane"/>
    <property type="evidence" value="ECO:0000314"/>
    <property type="project" value="UniProtKB"/>
</dbReference>
<dbReference type="GO" id="GO:0043231">
    <property type="term" value="C:intracellular membrane-bounded organelle"/>
    <property type="evidence" value="ECO:0000318"/>
    <property type="project" value="GO_Central"/>
</dbReference>
<dbReference type="GO" id="GO:0016020">
    <property type="term" value="C:membrane"/>
    <property type="evidence" value="ECO:0000304"/>
    <property type="project" value="dictyBase"/>
</dbReference>
<dbReference type="GO" id="GO:0140220">
    <property type="term" value="C:pathogen-containing vacuole"/>
    <property type="evidence" value="ECO:0007005"/>
    <property type="project" value="dictyBase"/>
</dbReference>
<dbReference type="GO" id="GO:0005886">
    <property type="term" value="C:plasma membrane"/>
    <property type="evidence" value="ECO:0000314"/>
    <property type="project" value="UniProtKB"/>
</dbReference>
<dbReference type="GO" id="GO:0005524">
    <property type="term" value="F:ATP binding"/>
    <property type="evidence" value="ECO:0000304"/>
    <property type="project" value="dictyBase"/>
</dbReference>
<dbReference type="GO" id="GO:0016887">
    <property type="term" value="F:ATP hydrolysis activity"/>
    <property type="evidence" value="ECO:0007669"/>
    <property type="project" value="InterPro"/>
</dbReference>
<dbReference type="GO" id="GO:0005509">
    <property type="term" value="F:calcium ion binding"/>
    <property type="evidence" value="ECO:0000304"/>
    <property type="project" value="dictyBase"/>
</dbReference>
<dbReference type="GO" id="GO:0015085">
    <property type="term" value="F:calcium ion transmembrane transporter activity"/>
    <property type="evidence" value="ECO:0000314"/>
    <property type="project" value="dictyBase"/>
</dbReference>
<dbReference type="GO" id="GO:0005388">
    <property type="term" value="F:P-type calcium transporter activity"/>
    <property type="evidence" value="ECO:0000314"/>
    <property type="project" value="UniProtKB"/>
</dbReference>
<dbReference type="GO" id="GO:0006816">
    <property type="term" value="P:calcium ion transport"/>
    <property type="evidence" value="ECO:0000314"/>
    <property type="project" value="UniProtKB"/>
</dbReference>
<dbReference type="CDD" id="cd02081">
    <property type="entry name" value="P-type_ATPase_Ca_PMCA-like"/>
    <property type="match status" value="1"/>
</dbReference>
<dbReference type="FunFam" id="2.70.150.10:FF:000028">
    <property type="entry name" value="Calcium-transporting ATPase"/>
    <property type="match status" value="1"/>
</dbReference>
<dbReference type="FunFam" id="3.40.1110.10:FF:000045">
    <property type="entry name" value="Calcium-transporting ATPase"/>
    <property type="match status" value="1"/>
</dbReference>
<dbReference type="FunFam" id="3.40.50.1000:FF:000018">
    <property type="entry name" value="Calcium-transporting ATPase"/>
    <property type="match status" value="1"/>
</dbReference>
<dbReference type="Gene3D" id="3.40.1110.10">
    <property type="entry name" value="Calcium-transporting ATPase, cytoplasmic domain N"/>
    <property type="match status" value="1"/>
</dbReference>
<dbReference type="Gene3D" id="2.70.150.10">
    <property type="entry name" value="Calcium-transporting ATPase, cytoplasmic transduction domain A"/>
    <property type="match status" value="1"/>
</dbReference>
<dbReference type="Gene3D" id="1.20.1110.10">
    <property type="entry name" value="Calcium-transporting ATPase, transmembrane domain"/>
    <property type="match status" value="1"/>
</dbReference>
<dbReference type="Gene3D" id="3.40.50.1000">
    <property type="entry name" value="HAD superfamily/HAD-like"/>
    <property type="match status" value="1"/>
</dbReference>
<dbReference type="InterPro" id="IPR006068">
    <property type="entry name" value="ATPase_P-typ_cation-transptr_C"/>
</dbReference>
<dbReference type="InterPro" id="IPR004014">
    <property type="entry name" value="ATPase_P-typ_cation-transptr_N"/>
</dbReference>
<dbReference type="InterPro" id="IPR023299">
    <property type="entry name" value="ATPase_P-typ_cyto_dom_N"/>
</dbReference>
<dbReference type="InterPro" id="IPR018303">
    <property type="entry name" value="ATPase_P-typ_P_site"/>
</dbReference>
<dbReference type="InterPro" id="IPR023298">
    <property type="entry name" value="ATPase_P-typ_TM_dom_sf"/>
</dbReference>
<dbReference type="InterPro" id="IPR008250">
    <property type="entry name" value="ATPase_P-typ_transduc_dom_A_sf"/>
</dbReference>
<dbReference type="InterPro" id="IPR036412">
    <property type="entry name" value="HAD-like_sf"/>
</dbReference>
<dbReference type="InterPro" id="IPR023214">
    <property type="entry name" value="HAD_sf"/>
</dbReference>
<dbReference type="InterPro" id="IPR006408">
    <property type="entry name" value="P-type_ATPase_IIB"/>
</dbReference>
<dbReference type="InterPro" id="IPR001757">
    <property type="entry name" value="P_typ_ATPase"/>
</dbReference>
<dbReference type="InterPro" id="IPR044492">
    <property type="entry name" value="P_typ_ATPase_HD_dom"/>
</dbReference>
<dbReference type="NCBIfam" id="TIGR01517">
    <property type="entry name" value="ATPase-IIB_Ca"/>
    <property type="match status" value="1"/>
</dbReference>
<dbReference type="NCBIfam" id="TIGR01494">
    <property type="entry name" value="ATPase_P-type"/>
    <property type="match status" value="3"/>
</dbReference>
<dbReference type="PANTHER" id="PTHR24093:SF369">
    <property type="entry name" value="CALCIUM-TRANSPORTING ATPASE"/>
    <property type="match status" value="1"/>
</dbReference>
<dbReference type="PANTHER" id="PTHR24093">
    <property type="entry name" value="CATION TRANSPORTING ATPASE"/>
    <property type="match status" value="1"/>
</dbReference>
<dbReference type="Pfam" id="PF13246">
    <property type="entry name" value="Cation_ATPase"/>
    <property type="match status" value="1"/>
</dbReference>
<dbReference type="Pfam" id="PF00689">
    <property type="entry name" value="Cation_ATPase_C"/>
    <property type="match status" value="1"/>
</dbReference>
<dbReference type="Pfam" id="PF00690">
    <property type="entry name" value="Cation_ATPase_N"/>
    <property type="match status" value="1"/>
</dbReference>
<dbReference type="Pfam" id="PF00122">
    <property type="entry name" value="E1-E2_ATPase"/>
    <property type="match status" value="1"/>
</dbReference>
<dbReference type="Pfam" id="PF00702">
    <property type="entry name" value="Hydrolase"/>
    <property type="match status" value="1"/>
</dbReference>
<dbReference type="PRINTS" id="PR00119">
    <property type="entry name" value="CATATPASE"/>
</dbReference>
<dbReference type="PRINTS" id="PR00120">
    <property type="entry name" value="HATPASE"/>
</dbReference>
<dbReference type="SFLD" id="SFLDG00002">
    <property type="entry name" value="C1.7:_P-type_atpase_like"/>
    <property type="match status" value="1"/>
</dbReference>
<dbReference type="SFLD" id="SFLDF00027">
    <property type="entry name" value="p-type_atpase"/>
    <property type="match status" value="1"/>
</dbReference>
<dbReference type="SMART" id="SM00831">
    <property type="entry name" value="Cation_ATPase_N"/>
    <property type="match status" value="1"/>
</dbReference>
<dbReference type="SUPFAM" id="SSF81653">
    <property type="entry name" value="Calcium ATPase, transduction domain A"/>
    <property type="match status" value="1"/>
</dbReference>
<dbReference type="SUPFAM" id="SSF81665">
    <property type="entry name" value="Calcium ATPase, transmembrane domain M"/>
    <property type="match status" value="1"/>
</dbReference>
<dbReference type="SUPFAM" id="SSF56784">
    <property type="entry name" value="HAD-like"/>
    <property type="match status" value="1"/>
</dbReference>
<dbReference type="SUPFAM" id="SSF81660">
    <property type="entry name" value="Metal cation-transporting ATPase, ATP-binding domain N"/>
    <property type="match status" value="1"/>
</dbReference>
<dbReference type="PROSITE" id="PS00154">
    <property type="entry name" value="ATPASE_E1_E2"/>
    <property type="match status" value="1"/>
</dbReference>
<keyword id="KW-0067">ATP-binding</keyword>
<keyword id="KW-0106">Calcium</keyword>
<keyword id="KW-0109">Calcium transport</keyword>
<keyword id="KW-1003">Cell membrane</keyword>
<keyword id="KW-0406">Ion transport</keyword>
<keyword id="KW-0460">Magnesium</keyword>
<keyword id="KW-0472">Membrane</keyword>
<keyword id="KW-0479">Metal-binding</keyword>
<keyword id="KW-0547">Nucleotide-binding</keyword>
<keyword id="KW-0597">Phosphoprotein</keyword>
<keyword id="KW-1185">Reference proteome</keyword>
<keyword id="KW-1278">Translocase</keyword>
<keyword id="KW-0812">Transmembrane</keyword>
<keyword id="KW-1133">Transmembrane helix</keyword>
<keyword id="KW-0813">Transport</keyword>
<keyword id="KW-0926">Vacuole</keyword>
<sequence length="1115" mass="120677">MTGSHEMESIMLDSMEEEFPVSVETLGKLVDVPKGFDTYAELGGLSGLSTKLKSNIKTGLPLEKSSTEENRVLKYSKNILPDPPHQPLWSIVLDALSDHILILLIVAAVVSIVLGSIDYTSDHPETGWIDGVAILVAVILVVGITSLNDFKNQARFRELNDKSNDKEVKGIRGGEQCQISIFDVKVGDIISLDTGDIICADGVFIEGHALKCDESSITGESDPIKKGQPQDNMDPFLISGSMVIEGFGTMLVTAVGVNSFNGKTMMGLRVASEDTPLQMKLSVLASRIGYFGMGAAILMLLIAIPKYFIQRKVHDIEITREDAQPIVQLVISAITIVVVAVPEGLPLAVTMALAYGMMKMFKENNLVRNLASCETMGSATTICSDKTGTLTQNVMSVVTGTICGVFPTLDGIAQKIPKHVQSILTDGMAINSNAYEGVSSKGKLEFIGSKTECALLNFGKLFGCDYNEVRKRLEVVELYPFSSARKRMSVLVKHDQNLRLFTKGASEIILGQCGSYLDEAGNIRPISEAKAYFEEQINNFASDALRTIGLAYRDFQYGECDFKEPPENNLVFIGIVGIKDPLRPEVPEAVEICKRAGIVVRMVTGDNLVTAQNIARNCGILTEGGLCMEGPKFRELSQSEMDAILPKLQVLARSSPTDKQLLVGRLKDLGEVVAVTGDGTNDGPALKLANVGFSMGISGTEVAIAASDVVLLDDNFASIVRAVLWGRNIYDAICKFLQFQLTVNVVAVTVAFIGTLTSDVVEDKDNSSSSGSADKVTEEEPRQGSPLTAVQLLWVNLIMDTLAALALATEPPTPELLERPPNGKNAPLITRSMWKNIIGQAALQLAILFTILYQGHNIFQHFVPQAHGPIIKNGLHHYTLVFNCFVFLQLFNEINARVLGSRTNPFKNFFNNPIFIAVMIFTLGVQIIFVTFGGSATSTDSLYIVEWICCVVVGAISLPVGLLLRKIPIREPVVKNEIPVHSEAVYTSPSPNPSSSNLLGSGGAKPISKDYPTSGESTPPINDEGSPLVTRKTSVGASANDNINTPIPSSSSNLVNLNKPTQVGRGWQIVRQTHKKLVVINALKEFSQNKEPGLVDVVRGTNRGSLHLPVNQINN</sequence>
<organism>
    <name type="scientific">Dictyostelium discoideum</name>
    <name type="common">Social amoeba</name>
    <dbReference type="NCBI Taxonomy" id="44689"/>
    <lineage>
        <taxon>Eukaryota</taxon>
        <taxon>Amoebozoa</taxon>
        <taxon>Evosea</taxon>
        <taxon>Eumycetozoa</taxon>
        <taxon>Dictyostelia</taxon>
        <taxon>Dictyosteliales</taxon>
        <taxon>Dictyosteliaceae</taxon>
        <taxon>Dictyostelium</taxon>
    </lineage>
</organism>
<feature type="chain" id="PRO_0000046179" description="Calcium-transporting ATPase PAT1">
    <location>
        <begin position="1"/>
        <end position="1115"/>
    </location>
</feature>
<feature type="topological domain" description="Stromal" evidence="2">
    <location>
        <begin position="1"/>
        <end position="99"/>
    </location>
</feature>
<feature type="transmembrane region" description="Helical" evidence="2">
    <location>
        <begin position="100"/>
        <end position="120"/>
    </location>
</feature>
<feature type="topological domain" description="Lumenal" evidence="2">
    <location>
        <begin position="121"/>
        <end position="126"/>
    </location>
</feature>
<feature type="transmembrane region" description="Helical" evidence="2">
    <location>
        <begin position="127"/>
        <end position="147"/>
    </location>
</feature>
<feature type="topological domain" description="Stromal" evidence="2">
    <location>
        <begin position="148"/>
        <end position="235"/>
    </location>
</feature>
<feature type="transmembrane region" description="Helical" evidence="2">
    <location>
        <begin position="236"/>
        <end position="256"/>
    </location>
</feature>
<feature type="topological domain" description="Lumenal" evidence="2">
    <location>
        <begin position="257"/>
        <end position="287"/>
    </location>
</feature>
<feature type="transmembrane region" description="Helical" evidence="2">
    <location>
        <begin position="288"/>
        <end position="308"/>
    </location>
</feature>
<feature type="topological domain" description="Stromal" evidence="2">
    <location>
        <begin position="309"/>
        <end position="328"/>
    </location>
</feature>
<feature type="transmembrane region" description="Helical" evidence="2">
    <location>
        <begin position="329"/>
        <end position="349"/>
    </location>
</feature>
<feature type="topological domain" description="Lumenal" evidence="2">
    <location>
        <begin position="350"/>
        <end position="735"/>
    </location>
</feature>
<feature type="transmembrane region" description="Helical" evidence="2">
    <location>
        <begin position="736"/>
        <end position="756"/>
    </location>
</feature>
<feature type="topological domain" description="Stromal" evidence="2">
    <location>
        <begin position="757"/>
        <end position="832"/>
    </location>
</feature>
<feature type="transmembrane region" description="Helical" evidence="2">
    <location>
        <begin position="833"/>
        <end position="853"/>
    </location>
</feature>
<feature type="topological domain" description="Lumenal" evidence="2">
    <location>
        <begin position="854"/>
        <end position="873"/>
    </location>
</feature>
<feature type="transmembrane region" description="Helical" evidence="2">
    <location>
        <begin position="874"/>
        <end position="894"/>
    </location>
</feature>
<feature type="topological domain" description="Stromal" evidence="2">
    <location>
        <begin position="895"/>
        <end position="913"/>
    </location>
</feature>
<feature type="transmembrane region" description="Helical" evidence="2">
    <location>
        <begin position="914"/>
        <end position="934"/>
    </location>
</feature>
<feature type="topological domain" description="Lumenal" evidence="2">
    <location>
        <begin position="935"/>
        <end position="943"/>
    </location>
</feature>
<feature type="transmembrane region" description="Helical" evidence="2">
    <location>
        <begin position="944"/>
        <end position="964"/>
    </location>
</feature>
<feature type="topological domain" description="Stromal" evidence="2">
    <location>
        <begin position="965"/>
        <end position="1115"/>
    </location>
</feature>
<feature type="region of interest" description="Disordered" evidence="3">
    <location>
        <begin position="762"/>
        <end position="784"/>
    </location>
</feature>
<feature type="region of interest" description="Disordered" evidence="3">
    <location>
        <begin position="984"/>
        <end position="1056"/>
    </location>
</feature>
<feature type="compositionally biased region" description="Low complexity" evidence="3">
    <location>
        <begin position="1040"/>
        <end position="1053"/>
    </location>
</feature>
<feature type="active site" description="4-aspartylphosphate intermediate" evidence="1">
    <location>
        <position position="385"/>
    </location>
</feature>
<feature type="binding site" evidence="1">
    <location>
        <position position="678"/>
    </location>
    <ligand>
        <name>Mg(2+)</name>
        <dbReference type="ChEBI" id="CHEBI:18420"/>
    </ligand>
</feature>
<feature type="binding site" evidence="1">
    <location>
        <position position="682"/>
    </location>
    <ligand>
        <name>Mg(2+)</name>
        <dbReference type="ChEBI" id="CHEBI:18420"/>
    </ligand>
</feature>
<feature type="sequence conflict" description="In Ref. 1; CAA61551." evidence="8" ref="1">
    <original>C</original>
    <variation>Y</variation>
    <location>
        <position position="212"/>
    </location>
</feature>
<feature type="sequence conflict" description="In Ref. 1; CAA61551." evidence="8" ref="1">
    <original>L</original>
    <variation>H</variation>
    <location>
        <position position="277"/>
    </location>
</feature>
<feature type="sequence conflict" description="In Ref. 1; CAA61551." evidence="8" ref="1">
    <original>GY</original>
    <variation>WL</variation>
    <location>
        <begin position="289"/>
        <end position="290"/>
    </location>
</feature>
<feature type="sequence conflict" description="In Ref. 1; CAA61551." evidence="8" ref="1">
    <original>G</original>
    <variation>V</variation>
    <location>
        <position position="344"/>
    </location>
</feature>
<feature type="sequence conflict" description="In Ref. 1; CAA61551." evidence="8" ref="1">
    <original>A</original>
    <variation>V</variation>
    <location>
        <position position="643"/>
    </location>
</feature>
<feature type="sequence conflict" description="In Ref. 1; CAA61551." evidence="8" ref="1">
    <original>T</original>
    <variation>S</variation>
    <location>
        <position position="680"/>
    </location>
</feature>
<proteinExistence type="evidence at protein level"/>
<accession>P54678</accession>
<accession>Q54YN8</accession>
<reference key="1">
    <citation type="journal article" date="1995" name="J. Biol. Chem.">
        <title>Molecular cloning of an intracellular P-type ATPase from Dictyostelium that is up-regulated in calcium-adapted cells.</title>
        <authorList>
            <person name="Moniakis J."/>
            <person name="Coukell M.B."/>
            <person name="Forer A."/>
        </authorList>
    </citation>
    <scope>NUCLEOTIDE SEQUENCE [MRNA]</scope>
    <scope>FUNCTION</scope>
    <scope>SUBCELLULAR LOCATION</scope>
    <scope>DEVELOPMENTAL STAGE</scope>
    <scope>INDUCTION</scope>
    <source>
        <strain>AX3</strain>
    </source>
</reference>
<reference key="2">
    <citation type="journal article" date="2005" name="Nature">
        <title>The genome of the social amoeba Dictyostelium discoideum.</title>
        <authorList>
            <person name="Eichinger L."/>
            <person name="Pachebat J.A."/>
            <person name="Gloeckner G."/>
            <person name="Rajandream M.A."/>
            <person name="Sucgang R."/>
            <person name="Berriman M."/>
            <person name="Song J."/>
            <person name="Olsen R."/>
            <person name="Szafranski K."/>
            <person name="Xu Q."/>
            <person name="Tunggal B."/>
            <person name="Kummerfeld S."/>
            <person name="Madera M."/>
            <person name="Konfortov B.A."/>
            <person name="Rivero F."/>
            <person name="Bankier A.T."/>
            <person name="Lehmann R."/>
            <person name="Hamlin N."/>
            <person name="Davies R."/>
            <person name="Gaudet P."/>
            <person name="Fey P."/>
            <person name="Pilcher K."/>
            <person name="Chen G."/>
            <person name="Saunders D."/>
            <person name="Sodergren E.J."/>
            <person name="Davis P."/>
            <person name="Kerhornou A."/>
            <person name="Nie X."/>
            <person name="Hall N."/>
            <person name="Anjard C."/>
            <person name="Hemphill L."/>
            <person name="Bason N."/>
            <person name="Farbrother P."/>
            <person name="Desany B."/>
            <person name="Just E."/>
            <person name="Morio T."/>
            <person name="Rost R."/>
            <person name="Churcher C.M."/>
            <person name="Cooper J."/>
            <person name="Haydock S."/>
            <person name="van Driessche N."/>
            <person name="Cronin A."/>
            <person name="Goodhead I."/>
            <person name="Muzny D.M."/>
            <person name="Mourier T."/>
            <person name="Pain A."/>
            <person name="Lu M."/>
            <person name="Harper D."/>
            <person name="Lindsay R."/>
            <person name="Hauser H."/>
            <person name="James K.D."/>
            <person name="Quiles M."/>
            <person name="Madan Babu M."/>
            <person name="Saito T."/>
            <person name="Buchrieser C."/>
            <person name="Wardroper A."/>
            <person name="Felder M."/>
            <person name="Thangavelu M."/>
            <person name="Johnson D."/>
            <person name="Knights A."/>
            <person name="Loulseged H."/>
            <person name="Mungall K.L."/>
            <person name="Oliver K."/>
            <person name="Price C."/>
            <person name="Quail M.A."/>
            <person name="Urushihara H."/>
            <person name="Hernandez J."/>
            <person name="Rabbinowitsch E."/>
            <person name="Steffen D."/>
            <person name="Sanders M."/>
            <person name="Ma J."/>
            <person name="Kohara Y."/>
            <person name="Sharp S."/>
            <person name="Simmonds M.N."/>
            <person name="Spiegler S."/>
            <person name="Tivey A."/>
            <person name="Sugano S."/>
            <person name="White B."/>
            <person name="Walker D."/>
            <person name="Woodward J.R."/>
            <person name="Winckler T."/>
            <person name="Tanaka Y."/>
            <person name="Shaulsky G."/>
            <person name="Schleicher M."/>
            <person name="Weinstock G.M."/>
            <person name="Rosenthal A."/>
            <person name="Cox E.C."/>
            <person name="Chisholm R.L."/>
            <person name="Gibbs R.A."/>
            <person name="Loomis W.F."/>
            <person name="Platzer M."/>
            <person name="Kay R.R."/>
            <person name="Williams J.G."/>
            <person name="Dear P.H."/>
            <person name="Noegel A.A."/>
            <person name="Barrell B.G."/>
            <person name="Kuspa A."/>
        </authorList>
    </citation>
    <scope>NUCLEOTIDE SEQUENCE [LARGE SCALE GENOMIC DNA]</scope>
    <source>
        <strain>AX4</strain>
    </source>
</reference>
<reference key="3">
    <citation type="journal article" date="1999" name="J. Cell Sci.">
        <title>Involvement of the Ca2+-ATPase PAT1 and the contractile vacuole in calcium regulation in Dictyostelium discoideum.</title>
        <authorList>
            <person name="Moniakis J."/>
            <person name="Coukell M.B."/>
            <person name="Janiec A."/>
        </authorList>
    </citation>
    <scope>FUNCTION</scope>
    <scope>SUBCELLULAR LOCATION</scope>
    <scope>INDUCTION</scope>
    <scope>CATALYTIC ACTIVITY</scope>
</reference>
<gene>
    <name type="primary">patA</name>
    <name type="ORF">DDB_G0277861</name>
</gene>